<protein>
    <recommendedName>
        <fullName evidence="1">Sec-independent protein translocase protein TatB</fullName>
    </recommendedName>
</protein>
<comment type="function">
    <text evidence="1">Part of the twin-arginine translocation (Tat) system that transports large folded proteins containing a characteristic twin-arginine motif in their signal peptide across membranes. Together with TatC, TatB is part of a receptor directly interacting with Tat signal peptides. TatB may form an oligomeric binding site that transiently accommodates folded Tat precursor proteins before their translocation.</text>
</comment>
<comment type="subunit">
    <text evidence="1">The Tat system comprises two distinct complexes: a TatABC complex, containing multiple copies of TatA, TatB and TatC subunits, and a separate TatA complex, containing only TatA subunits. Substrates initially bind to the TatABC complex, which probably triggers association of the separate TatA complex to form the active translocon.</text>
</comment>
<comment type="subcellular location">
    <subcellularLocation>
        <location evidence="1">Cell inner membrane</location>
        <topology evidence="1">Single-pass membrane protein</topology>
    </subcellularLocation>
</comment>
<comment type="similarity">
    <text evidence="1">Belongs to the TatB family.</text>
</comment>
<evidence type="ECO:0000255" key="1">
    <source>
        <dbReference type="HAMAP-Rule" id="MF_00237"/>
    </source>
</evidence>
<evidence type="ECO:0000256" key="2">
    <source>
        <dbReference type="SAM" id="MobiDB-lite"/>
    </source>
</evidence>
<accession>B8CI02</accession>
<name>TATB_SHEPW</name>
<dbReference type="EMBL" id="CP000472">
    <property type="protein sequence ID" value="ACJ27278.1"/>
    <property type="molecule type" value="Genomic_DNA"/>
</dbReference>
<dbReference type="RefSeq" id="WP_020910659.1">
    <property type="nucleotide sequence ID" value="NC_011566.1"/>
</dbReference>
<dbReference type="SMR" id="B8CI02"/>
<dbReference type="STRING" id="225849.swp_0447"/>
<dbReference type="KEGG" id="swp:swp_0447"/>
<dbReference type="eggNOG" id="COG1826">
    <property type="taxonomic scope" value="Bacteria"/>
</dbReference>
<dbReference type="HOGENOM" id="CLU_086034_1_0_6"/>
<dbReference type="OrthoDB" id="9816005at2"/>
<dbReference type="Proteomes" id="UP000000753">
    <property type="component" value="Chromosome"/>
</dbReference>
<dbReference type="GO" id="GO:0033281">
    <property type="term" value="C:TAT protein transport complex"/>
    <property type="evidence" value="ECO:0007669"/>
    <property type="project" value="UniProtKB-UniRule"/>
</dbReference>
<dbReference type="GO" id="GO:0008320">
    <property type="term" value="F:protein transmembrane transporter activity"/>
    <property type="evidence" value="ECO:0007669"/>
    <property type="project" value="UniProtKB-UniRule"/>
</dbReference>
<dbReference type="GO" id="GO:0043953">
    <property type="term" value="P:protein transport by the Tat complex"/>
    <property type="evidence" value="ECO:0007669"/>
    <property type="project" value="UniProtKB-UniRule"/>
</dbReference>
<dbReference type="Gene3D" id="1.20.5.3310">
    <property type="match status" value="1"/>
</dbReference>
<dbReference type="HAMAP" id="MF_00237">
    <property type="entry name" value="TatB"/>
    <property type="match status" value="1"/>
</dbReference>
<dbReference type="InterPro" id="IPR003369">
    <property type="entry name" value="TatA/B/E"/>
</dbReference>
<dbReference type="InterPro" id="IPR018448">
    <property type="entry name" value="TatB"/>
</dbReference>
<dbReference type="NCBIfam" id="TIGR01410">
    <property type="entry name" value="tatB"/>
    <property type="match status" value="1"/>
</dbReference>
<dbReference type="PANTHER" id="PTHR33162">
    <property type="entry name" value="SEC-INDEPENDENT PROTEIN TRANSLOCASE PROTEIN TATA, CHLOROPLASTIC"/>
    <property type="match status" value="1"/>
</dbReference>
<dbReference type="PANTHER" id="PTHR33162:SF1">
    <property type="entry name" value="SEC-INDEPENDENT PROTEIN TRANSLOCASE PROTEIN TATA, CHLOROPLASTIC"/>
    <property type="match status" value="1"/>
</dbReference>
<dbReference type="Pfam" id="PF02416">
    <property type="entry name" value="TatA_B_E"/>
    <property type="match status" value="1"/>
</dbReference>
<dbReference type="PRINTS" id="PR01506">
    <property type="entry name" value="TATBPROTEIN"/>
</dbReference>
<organism>
    <name type="scientific">Shewanella piezotolerans (strain WP3 / JCM 13877)</name>
    <dbReference type="NCBI Taxonomy" id="225849"/>
    <lineage>
        <taxon>Bacteria</taxon>
        <taxon>Pseudomonadati</taxon>
        <taxon>Pseudomonadota</taxon>
        <taxon>Gammaproteobacteria</taxon>
        <taxon>Alteromonadales</taxon>
        <taxon>Shewanellaceae</taxon>
        <taxon>Shewanella</taxon>
    </lineage>
</organism>
<reference key="1">
    <citation type="journal article" date="2008" name="PLoS ONE">
        <title>Environmental adaptation: genomic analysis of the piezotolerant and psychrotolerant deep-sea iron reducing bacterium Shewanella piezotolerans WP3.</title>
        <authorList>
            <person name="Wang F."/>
            <person name="Wang J."/>
            <person name="Jian H."/>
            <person name="Zhang B."/>
            <person name="Li S."/>
            <person name="Wang F."/>
            <person name="Zeng X."/>
            <person name="Gao L."/>
            <person name="Bartlett D.H."/>
            <person name="Yu J."/>
            <person name="Hu S."/>
            <person name="Xiao X."/>
        </authorList>
    </citation>
    <scope>NUCLEOTIDE SEQUENCE [LARGE SCALE GENOMIC DNA]</scope>
    <source>
        <strain>WP3 / JCM 13877</strain>
    </source>
</reference>
<feature type="chain" id="PRO_1000196663" description="Sec-independent protein translocase protein TatB">
    <location>
        <begin position="1"/>
        <end position="131"/>
    </location>
</feature>
<feature type="transmembrane region" description="Helical" evidence="1">
    <location>
        <begin position="2"/>
        <end position="22"/>
    </location>
</feature>
<feature type="region of interest" description="Disordered" evidence="2">
    <location>
        <begin position="69"/>
        <end position="131"/>
    </location>
</feature>
<feature type="compositionally biased region" description="Low complexity" evidence="2">
    <location>
        <begin position="105"/>
        <end position="123"/>
    </location>
</feature>
<proteinExistence type="inferred from homology"/>
<keyword id="KW-0997">Cell inner membrane</keyword>
<keyword id="KW-1003">Cell membrane</keyword>
<keyword id="KW-0472">Membrane</keyword>
<keyword id="KW-0653">Protein transport</keyword>
<keyword id="KW-0811">Translocation</keyword>
<keyword id="KW-0812">Transmembrane</keyword>
<keyword id="KW-1133">Transmembrane helix</keyword>
<keyword id="KW-0813">Transport</keyword>
<gene>
    <name evidence="1" type="primary">tatB</name>
    <name type="ordered locus">swp_0447</name>
</gene>
<sequence length="131" mass="14345">MFDGIGFMELLLIGVLGLVVLGPERLPVAVRSISGWIRAMKKMANSVKDELEQELKIEQLHTDLKKAENQGLKNLAPELQDSIDQLKQAAESVNRPYQVEDAPSAKETPAKETATTETTSTENAKSDKPNG</sequence>